<gene>
    <name evidence="1" type="primary">tus</name>
    <name type="ordered locus">ECIAI39_1448</name>
</gene>
<feature type="chain" id="PRO_1000126035" description="DNA replication terminus site-binding protein">
    <location>
        <begin position="1"/>
        <end position="309"/>
    </location>
</feature>
<protein>
    <recommendedName>
        <fullName evidence="1">DNA replication terminus site-binding protein</fullName>
        <shortName evidence="1">Ter-binding protein</shortName>
    </recommendedName>
</protein>
<organism>
    <name type="scientific">Escherichia coli O7:K1 (strain IAI39 / ExPEC)</name>
    <dbReference type="NCBI Taxonomy" id="585057"/>
    <lineage>
        <taxon>Bacteria</taxon>
        <taxon>Pseudomonadati</taxon>
        <taxon>Pseudomonadota</taxon>
        <taxon>Gammaproteobacteria</taxon>
        <taxon>Enterobacterales</taxon>
        <taxon>Enterobacteriaceae</taxon>
        <taxon>Escherichia</taxon>
    </lineage>
</organism>
<evidence type="ECO:0000255" key="1">
    <source>
        <dbReference type="HAMAP-Rule" id="MF_00483"/>
    </source>
</evidence>
<proteinExistence type="inferred from homology"/>
<accession>B7NUM9</accession>
<reference key="1">
    <citation type="journal article" date="2009" name="PLoS Genet.">
        <title>Organised genome dynamics in the Escherichia coli species results in highly diverse adaptive paths.</title>
        <authorList>
            <person name="Touchon M."/>
            <person name="Hoede C."/>
            <person name="Tenaillon O."/>
            <person name="Barbe V."/>
            <person name="Baeriswyl S."/>
            <person name="Bidet P."/>
            <person name="Bingen E."/>
            <person name="Bonacorsi S."/>
            <person name="Bouchier C."/>
            <person name="Bouvet O."/>
            <person name="Calteau A."/>
            <person name="Chiapello H."/>
            <person name="Clermont O."/>
            <person name="Cruveiller S."/>
            <person name="Danchin A."/>
            <person name="Diard M."/>
            <person name="Dossat C."/>
            <person name="Karoui M.E."/>
            <person name="Frapy E."/>
            <person name="Garry L."/>
            <person name="Ghigo J.M."/>
            <person name="Gilles A.M."/>
            <person name="Johnson J."/>
            <person name="Le Bouguenec C."/>
            <person name="Lescat M."/>
            <person name="Mangenot S."/>
            <person name="Martinez-Jehanne V."/>
            <person name="Matic I."/>
            <person name="Nassif X."/>
            <person name="Oztas S."/>
            <person name="Petit M.A."/>
            <person name="Pichon C."/>
            <person name="Rouy Z."/>
            <person name="Ruf C.S."/>
            <person name="Schneider D."/>
            <person name="Tourret J."/>
            <person name="Vacherie B."/>
            <person name="Vallenet D."/>
            <person name="Medigue C."/>
            <person name="Rocha E.P.C."/>
            <person name="Denamur E."/>
        </authorList>
    </citation>
    <scope>NUCLEOTIDE SEQUENCE [LARGE SCALE GENOMIC DNA]</scope>
    <source>
        <strain>IAI39 / ExPEC</strain>
    </source>
</reference>
<dbReference type="EMBL" id="CU928164">
    <property type="protein sequence ID" value="CAR17581.1"/>
    <property type="molecule type" value="Genomic_DNA"/>
</dbReference>
<dbReference type="RefSeq" id="WP_012602309.1">
    <property type="nucleotide sequence ID" value="NC_011750.1"/>
</dbReference>
<dbReference type="RefSeq" id="YP_002407453.1">
    <property type="nucleotide sequence ID" value="NC_011750.1"/>
</dbReference>
<dbReference type="SMR" id="B7NUM9"/>
<dbReference type="STRING" id="585057.ECIAI39_1448"/>
<dbReference type="KEGG" id="ect:ECIAI39_1448"/>
<dbReference type="PATRIC" id="fig|585057.6.peg.1513"/>
<dbReference type="HOGENOM" id="CLU_078181_0_0_6"/>
<dbReference type="Proteomes" id="UP000000749">
    <property type="component" value="Chromosome"/>
</dbReference>
<dbReference type="GO" id="GO:0005737">
    <property type="term" value="C:cytoplasm"/>
    <property type="evidence" value="ECO:0007669"/>
    <property type="project" value="UniProtKB-SubCell"/>
</dbReference>
<dbReference type="GO" id="GO:0003677">
    <property type="term" value="F:DNA binding"/>
    <property type="evidence" value="ECO:0007669"/>
    <property type="project" value="UniProtKB-UniRule"/>
</dbReference>
<dbReference type="GO" id="GO:0006274">
    <property type="term" value="P:DNA replication termination"/>
    <property type="evidence" value="ECO:0007669"/>
    <property type="project" value="UniProtKB-UniRule"/>
</dbReference>
<dbReference type="Gene3D" id="3.30.54.10">
    <property type="match status" value="1"/>
</dbReference>
<dbReference type="Gene3D" id="3.50.14.10">
    <property type="entry name" value="Replication terminator Tus, domain 1 superfamily/Replication terminator Tus"/>
    <property type="match status" value="1"/>
</dbReference>
<dbReference type="HAMAP" id="MF_00483">
    <property type="entry name" value="Rep_term_Tus"/>
    <property type="match status" value="1"/>
</dbReference>
<dbReference type="InterPro" id="IPR008865">
    <property type="entry name" value="DNA_replication_term_site-bd"/>
</dbReference>
<dbReference type="InterPro" id="IPR036381">
    <property type="entry name" value="Tus_dom1"/>
</dbReference>
<dbReference type="InterPro" id="IPR036384">
    <property type="entry name" value="Tus_sf"/>
</dbReference>
<dbReference type="NCBIfam" id="TIGR02648">
    <property type="entry name" value="rep_term_tus"/>
    <property type="match status" value="1"/>
</dbReference>
<dbReference type="Pfam" id="PF05472">
    <property type="entry name" value="Ter"/>
    <property type="match status" value="1"/>
</dbReference>
<dbReference type="SUPFAM" id="SSF56596">
    <property type="entry name" value="Replication terminator protein (Tus)"/>
    <property type="match status" value="1"/>
</dbReference>
<name>TUS_ECO7I</name>
<comment type="function">
    <text evidence="1">Trans-acting protein required for termination of DNA replication. Binds to DNA replication terminator sequences (terA to terF) to prevent the passage of replication forks. The termination efficiency will be affected by the affinity of this protein for the terminator sequence.</text>
</comment>
<comment type="subcellular location">
    <subcellularLocation>
        <location evidence="1">Cytoplasm</location>
    </subcellularLocation>
</comment>
<comment type="similarity">
    <text evidence="1">Belongs to the Tus family.</text>
</comment>
<sequence length="309" mass="35785">MARYDLVDRLNTTFRQMEQELAAFAAHLEQHKLLVARVFSLPEVKKEDEHNPLNRIEVKQHLGNDAQSLALRHFRHLFIQQQSENRSSKAAVRLPGVLFYQVDNLSQAALVSHIQHINKLKTTFEHIVTVESELPTAARFEWVHRHLPGLITLNAYRTLTVLHDPATLRFGWANKHIIKNLHRDEVLAQLEKSLKSPRSVAPWTREEWQRKLEREYQDIAALPQNAKLKIKRPVKVQPIARVWYKGDQKQVQHACPTPLIALINRDNGAGVPDVGELLNYDADNVQHRYKPQAQPLRLIIPRLHLYVAD</sequence>
<keyword id="KW-0963">Cytoplasm</keyword>
<keyword id="KW-0235">DNA replication</keyword>
<keyword id="KW-0238">DNA-binding</keyword>